<evidence type="ECO:0000250" key="1">
    <source>
        <dbReference type="UniProtKB" id="A1E295"/>
    </source>
</evidence>
<evidence type="ECO:0000250" key="2">
    <source>
        <dbReference type="UniProtKB" id="P10605"/>
    </source>
</evidence>
<evidence type="ECO:0000255" key="3"/>
<evidence type="ECO:0000255" key="4">
    <source>
        <dbReference type="PROSITE-ProRule" id="PRU10088"/>
    </source>
</evidence>
<evidence type="ECO:0000255" key="5">
    <source>
        <dbReference type="PROSITE-ProRule" id="PRU10089"/>
    </source>
</evidence>
<evidence type="ECO:0000255" key="6">
    <source>
        <dbReference type="PROSITE-ProRule" id="PRU10090"/>
    </source>
</evidence>
<evidence type="ECO:0000269" key="7">
    <source>
    </source>
</evidence>
<evidence type="ECO:0000269" key="8">
    <source>
    </source>
</evidence>
<evidence type="ECO:0000269" key="9">
    <source>
    </source>
</evidence>
<evidence type="ECO:0000269" key="10">
    <source>
    </source>
</evidence>
<evidence type="ECO:0000269" key="11">
    <source>
    </source>
</evidence>
<evidence type="ECO:0000269" key="12">
    <source>
    </source>
</evidence>
<evidence type="ECO:0000269" key="13">
    <source>
    </source>
</evidence>
<evidence type="ECO:0000269" key="14">
    <source>
    </source>
</evidence>
<evidence type="ECO:0000269" key="15">
    <source>
    </source>
</evidence>
<evidence type="ECO:0000269" key="16">
    <source>
    </source>
</evidence>
<evidence type="ECO:0000269" key="17">
    <source>
    </source>
</evidence>
<evidence type="ECO:0000303" key="18">
    <source>
    </source>
</evidence>
<evidence type="ECO:0000305" key="19"/>
<evidence type="ECO:0007744" key="20">
    <source>
        <dbReference type="PDB" id="8HE9"/>
    </source>
</evidence>
<evidence type="ECO:0007744" key="21">
    <source>
        <dbReference type="PDB" id="8HEI"/>
    </source>
</evidence>
<evidence type="ECO:0007744" key="22">
    <source>
        <dbReference type="PDB" id="8HEN"/>
    </source>
</evidence>
<evidence type="ECO:0007829" key="23">
    <source>
        <dbReference type="PDB" id="1GMY"/>
    </source>
</evidence>
<evidence type="ECO:0007829" key="24">
    <source>
        <dbReference type="PDB" id="2IPP"/>
    </source>
</evidence>
<evidence type="ECO:0007829" key="25">
    <source>
        <dbReference type="PDB" id="3CBK"/>
    </source>
</evidence>
<evidence type="ECO:0007829" key="26">
    <source>
        <dbReference type="PDB" id="3K9M"/>
    </source>
</evidence>
<evidence type="ECO:0007829" key="27">
    <source>
        <dbReference type="PDB" id="3PBH"/>
    </source>
</evidence>
<evidence type="ECO:0007829" key="28">
    <source>
        <dbReference type="PDB" id="5MBL"/>
    </source>
</evidence>
<evidence type="ECO:0007829" key="29">
    <source>
        <dbReference type="PDB" id="5MBM"/>
    </source>
</evidence>
<evidence type="ECO:0007829" key="30">
    <source>
        <dbReference type="PDB" id="6AY2"/>
    </source>
</evidence>
<evidence type="ECO:0007829" key="31">
    <source>
        <dbReference type="PDB" id="8B4T"/>
    </source>
</evidence>
<evidence type="ECO:0007829" key="32">
    <source>
        <dbReference type="PDB" id="8HEI"/>
    </source>
</evidence>
<comment type="function">
    <text evidence="2 7 16">Thiol protease which is believed to participate in intracellular degradation and turnover of proteins (PubMed:12220505). Cleaves matrix extracellular phosphoglycoprotein MEPE (PubMed:12220505). Involved in the solubilization of cross-linked TG/thyroglobulin in the thyroid follicle lumen (By similarity). Has also been implicated in tumor invasion and metastasis (PubMed:3972105).</text>
</comment>
<comment type="catalytic activity">
    <reaction evidence="7 16">
        <text>Hydrolysis of proteins with broad specificity for peptide bonds. Preferentially cleaves -Arg-Arg-|-Xaa bonds in small molecule substrates (thus differing from cathepsin L). In addition to being an endopeptidase, shows peptidyl-dipeptidase activity, liberating C-terminal dipeptides.</text>
        <dbReference type="EC" id="3.4.22.1"/>
    </reaction>
</comment>
<comment type="activity regulation">
    <text evidence="7">Inhibited by leupeptin.</text>
</comment>
<comment type="subunit">
    <text evidence="10 13">Dimer of a heavy chain and a light chain cross-linked by a disulfide bond. Interacts with SRPX2. Directly interacts with SHKBP1 (PubMed:16733801).</text>
</comment>
<comment type="interaction">
    <interactant intactId="EBI-715062">
        <id>P07858</id>
    </interactant>
    <interactant intactId="EBI-742002">
        <id>Q6UY14</id>
        <label>ADAMTSL4</label>
    </interactant>
    <organismsDiffer>false</organismsDiffer>
    <experiments>3</experiments>
</comment>
<comment type="interaction">
    <interactant intactId="EBI-715062">
        <id>P07858</id>
    </interactant>
    <interactant intactId="EBI-2115136">
        <id>P02760</id>
        <label>AMBP</label>
    </interactant>
    <organismsDiffer>false</organismsDiffer>
    <experiments>4</experiments>
</comment>
<comment type="interaction">
    <interactant intactId="EBI-715062">
        <id>P07858</id>
    </interactant>
    <interactant intactId="EBI-18924329">
        <id>Q96IK1-2</id>
        <label>BOD1</label>
    </interactant>
    <organismsDiffer>false</organismsDiffer>
    <experiments>3</experiments>
</comment>
<comment type="interaction">
    <interactant intactId="EBI-715062">
        <id>P07858</id>
    </interactant>
    <interactant intactId="EBI-724303">
        <id>P01040</id>
        <label>CSTA</label>
    </interactant>
    <organismsDiffer>false</organismsDiffer>
    <experiments>2</experiments>
</comment>
<comment type="interaction">
    <interactant intactId="EBI-715062">
        <id>P07858</id>
    </interactant>
    <interactant intactId="EBI-744248">
        <id>P40692</id>
        <label>MLH1</label>
    </interactant>
    <organismsDiffer>false</organismsDiffer>
    <experiments>6</experiments>
</comment>
<comment type="interaction">
    <interactant intactId="EBI-715062">
        <id>P07858</id>
    </interactant>
    <interactant intactId="EBI-985303">
        <id>Q9NYA1</id>
        <label>SPHK1</label>
    </interactant>
    <organismsDiffer>false</organismsDiffer>
    <experiments>4</experiments>
</comment>
<comment type="subcellular location">
    <subcellularLocation>
        <location evidence="10">Lysosome</location>
    </subcellularLocation>
    <subcellularLocation>
        <location evidence="11">Melanosome</location>
    </subcellularLocation>
    <subcellularLocation>
        <location evidence="1">Secreted</location>
        <location evidence="1">Extracellular space</location>
    </subcellularLocation>
    <subcellularLocation>
        <location evidence="2">Apical cell membrane</location>
        <topology evidence="2">Peripheral membrane protein</topology>
        <orientation evidence="2">Extracellular side</orientation>
    </subcellularLocation>
    <text evidence="2 11">Identified by mass spectrometry in melanosome fractions from stage I to stage IV (PubMed:17081065). Localizes to the lumen of thyroid follicles and to the apical membrane of thyroid epithelial cells (By similarity).</text>
</comment>
<comment type="tissue specificity">
    <text evidence="14">Expressed in the stratum spinosum of the epidermis. Weak expression is detected in the stratum granulosum.</text>
</comment>
<comment type="disease" evidence="14">
    <disease id="DI-05321">
        <name>Keratolytic winter erythema</name>
        <acronym>KWE</acronym>
        <description>An autosomal dominant genodermatosis characterized by recurrent episodes of palmoplantar erythema and epidermal peeling presenting seasonal variation. KWE manifests during childhood. Skin lesions may spread to the dorsum of hands and feet and to the interdigital spaces. Lower legs, knees and thighs may also be involved. A less common finding is a slowly migratory, annular erythema that is seen mostly on the extremities. Between flares, the skin can appear unremarkable. Itching can occur, and hyperhidrosis, associated with a pungent odor, is invariably present. Formation of vesicles is rare, whereas keratolysis that causes the formation of dry blisters is regularly seen. Cold weather, moisture, febrile diseases, and physical and mental stress can trigger exacerbations. In severely affected individuals, skin manifestations persist unremittingly. Penetrance of the disease is high, but expressivity is variable, even within the same family.</description>
        <dbReference type="MIM" id="148370"/>
    </disease>
    <text evidence="14">The gene represented in this entry is involved in disease pathogenesis. Tandem duplications in a non-coding genomic region containing an active enhancer element for CTSB result in CTSB abnormal expression with pathological consequences.</text>
</comment>
<comment type="similarity">
    <text evidence="4 5 6">Belongs to the peptidase C1 family.</text>
</comment>
<comment type="online information" name="Atlas of Genetics and Cytogenetics in Oncology and Haematology">
    <link uri="https://atlasgeneticsoncology.org/gene/40202/CTSB"/>
</comment>
<sequence length="339" mass="37822">MWQLWASLCCLLVLANARSRPSFHPLSDELVNYVNKRNTTWQAGHNFYNVDMSYLKRLCGTFLGGPKPPQRVMFTEDLKLPASFDAREQWPQCPTIKEIRDQGSCGSCWAFGAVEAISDRICIHTNAHVSVEVSAEDLLTCCGSMCGDGCNGGYPAEAWNFWTRKGLVSGGLYESHVGCRPYSIPPCEHHVNGSRPPCTGEGDTPKCSKICEPGYSPTYKQDKHYGYNSYSVSNSEKDIMAEIYKNGPVEGAFSVYSDFLLYKSGVYQHVTGEMMGGHAIRILGWGVENGTPYWLVANSWNTDWGDNGFFKILRGQDHCGIESEVVAGIPRTDQYWEKI</sequence>
<reference key="1">
    <citation type="journal article" date="1986" name="Proc. Natl. Acad. Sci. U.S.A.">
        <title>Nucleotide and predicted amino acid sequences of cloned human and mouse preprocathepsin B cDNAs.</title>
        <authorList>
            <person name="Chan S.J."/>
            <person name="San Segundo B."/>
            <person name="McCormick M.B."/>
            <person name="Steiner D.F."/>
        </authorList>
    </citation>
    <scope>NUCLEOTIDE SEQUENCE [MRNA]</scope>
    <scope>VARIANT VAL-26</scope>
    <scope>GLYCOSYLATION AT ASN-192</scope>
</reference>
<reference key="2">
    <citation type="journal article" date="1994" name="Gene">
        <title>Human gastric adenocarcinoma cathepsin B: isolation and sequencing of full-length cDNAs and polymorphisms of the gene.</title>
        <authorList>
            <person name="Cao L."/>
            <person name="Taggart R.T."/>
            <person name="Berquin I.M."/>
            <person name="Moin K."/>
            <person name="Fong D."/>
            <person name="Sloane B.F."/>
        </authorList>
    </citation>
    <scope>NUCLEOTIDE SEQUENCE [MRNA]</scope>
    <source>
        <tissue>Gastric carcinoma</tissue>
    </source>
</reference>
<reference key="3">
    <citation type="journal article" date="2004" name="Nat. Genet.">
        <title>Complete sequencing and characterization of 21,243 full-length human cDNAs.</title>
        <authorList>
            <person name="Ota T."/>
            <person name="Suzuki Y."/>
            <person name="Nishikawa T."/>
            <person name="Otsuki T."/>
            <person name="Sugiyama T."/>
            <person name="Irie R."/>
            <person name="Wakamatsu A."/>
            <person name="Hayashi K."/>
            <person name="Sato H."/>
            <person name="Nagai K."/>
            <person name="Kimura K."/>
            <person name="Makita H."/>
            <person name="Sekine M."/>
            <person name="Obayashi M."/>
            <person name="Nishi T."/>
            <person name="Shibahara T."/>
            <person name="Tanaka T."/>
            <person name="Ishii S."/>
            <person name="Yamamoto J."/>
            <person name="Saito K."/>
            <person name="Kawai Y."/>
            <person name="Isono Y."/>
            <person name="Nakamura Y."/>
            <person name="Nagahari K."/>
            <person name="Murakami K."/>
            <person name="Yasuda T."/>
            <person name="Iwayanagi T."/>
            <person name="Wagatsuma M."/>
            <person name="Shiratori A."/>
            <person name="Sudo H."/>
            <person name="Hosoiri T."/>
            <person name="Kaku Y."/>
            <person name="Kodaira H."/>
            <person name="Kondo H."/>
            <person name="Sugawara M."/>
            <person name="Takahashi M."/>
            <person name="Kanda K."/>
            <person name="Yokoi T."/>
            <person name="Furuya T."/>
            <person name="Kikkawa E."/>
            <person name="Omura Y."/>
            <person name="Abe K."/>
            <person name="Kamihara K."/>
            <person name="Katsuta N."/>
            <person name="Sato K."/>
            <person name="Tanikawa M."/>
            <person name="Yamazaki M."/>
            <person name="Ninomiya K."/>
            <person name="Ishibashi T."/>
            <person name="Yamashita H."/>
            <person name="Murakawa K."/>
            <person name="Fujimori K."/>
            <person name="Tanai H."/>
            <person name="Kimata M."/>
            <person name="Watanabe M."/>
            <person name="Hiraoka S."/>
            <person name="Chiba Y."/>
            <person name="Ishida S."/>
            <person name="Ono Y."/>
            <person name="Takiguchi S."/>
            <person name="Watanabe S."/>
            <person name="Yosida M."/>
            <person name="Hotuta T."/>
            <person name="Kusano J."/>
            <person name="Kanehori K."/>
            <person name="Takahashi-Fujii A."/>
            <person name="Hara H."/>
            <person name="Tanase T.-O."/>
            <person name="Nomura Y."/>
            <person name="Togiya S."/>
            <person name="Komai F."/>
            <person name="Hara R."/>
            <person name="Takeuchi K."/>
            <person name="Arita M."/>
            <person name="Imose N."/>
            <person name="Musashino K."/>
            <person name="Yuuki H."/>
            <person name="Oshima A."/>
            <person name="Sasaki N."/>
            <person name="Aotsuka S."/>
            <person name="Yoshikawa Y."/>
            <person name="Matsunawa H."/>
            <person name="Ichihara T."/>
            <person name="Shiohata N."/>
            <person name="Sano S."/>
            <person name="Moriya S."/>
            <person name="Momiyama H."/>
            <person name="Satoh N."/>
            <person name="Takami S."/>
            <person name="Terashima Y."/>
            <person name="Suzuki O."/>
            <person name="Nakagawa S."/>
            <person name="Senoh A."/>
            <person name="Mizoguchi H."/>
            <person name="Goto Y."/>
            <person name="Shimizu F."/>
            <person name="Wakebe H."/>
            <person name="Hishigaki H."/>
            <person name="Watanabe T."/>
            <person name="Sugiyama A."/>
            <person name="Takemoto M."/>
            <person name="Kawakami B."/>
            <person name="Yamazaki M."/>
            <person name="Watanabe K."/>
            <person name="Kumagai A."/>
            <person name="Itakura S."/>
            <person name="Fukuzumi Y."/>
            <person name="Fujimori Y."/>
            <person name="Komiyama M."/>
            <person name="Tashiro H."/>
            <person name="Tanigami A."/>
            <person name="Fujiwara T."/>
            <person name="Ono T."/>
            <person name="Yamada K."/>
            <person name="Fujii Y."/>
            <person name="Ozaki K."/>
            <person name="Hirao M."/>
            <person name="Ohmori Y."/>
            <person name="Kawabata A."/>
            <person name="Hikiji T."/>
            <person name="Kobatake N."/>
            <person name="Inagaki H."/>
            <person name="Ikema Y."/>
            <person name="Okamoto S."/>
            <person name="Okitani R."/>
            <person name="Kawakami T."/>
            <person name="Noguchi S."/>
            <person name="Itoh T."/>
            <person name="Shigeta K."/>
            <person name="Senba T."/>
            <person name="Matsumura K."/>
            <person name="Nakajima Y."/>
            <person name="Mizuno T."/>
            <person name="Morinaga M."/>
            <person name="Sasaki M."/>
            <person name="Togashi T."/>
            <person name="Oyama M."/>
            <person name="Hata H."/>
            <person name="Watanabe M."/>
            <person name="Komatsu T."/>
            <person name="Mizushima-Sugano J."/>
            <person name="Satoh T."/>
            <person name="Shirai Y."/>
            <person name="Takahashi Y."/>
            <person name="Nakagawa K."/>
            <person name="Okumura K."/>
            <person name="Nagase T."/>
            <person name="Nomura N."/>
            <person name="Kikuchi H."/>
            <person name="Masuho Y."/>
            <person name="Yamashita R."/>
            <person name="Nakai K."/>
            <person name="Yada T."/>
            <person name="Nakamura Y."/>
            <person name="Ohara O."/>
            <person name="Isogai T."/>
            <person name="Sugano S."/>
        </authorList>
    </citation>
    <scope>NUCLEOTIDE SEQUENCE [LARGE SCALE MRNA]</scope>
    <scope>VARIANT VAL-26</scope>
    <source>
        <tissue>Esophagus</tissue>
    </source>
</reference>
<reference key="4">
    <citation type="journal article" date="2005" name="DNA Res.">
        <title>Signal sequence and keyword trap in silico for selection of full-length human cDNAs encoding secretion or membrane proteins from oligo-capped cDNA libraries.</title>
        <authorList>
            <person name="Otsuki T."/>
            <person name="Ota T."/>
            <person name="Nishikawa T."/>
            <person name="Hayashi K."/>
            <person name="Suzuki Y."/>
            <person name="Yamamoto J."/>
            <person name="Wakamatsu A."/>
            <person name="Kimura K."/>
            <person name="Sakamoto K."/>
            <person name="Hatano N."/>
            <person name="Kawai Y."/>
            <person name="Ishii S."/>
            <person name="Saito K."/>
            <person name="Kojima S."/>
            <person name="Sugiyama T."/>
            <person name="Ono T."/>
            <person name="Okano K."/>
            <person name="Yoshikawa Y."/>
            <person name="Aotsuka S."/>
            <person name="Sasaki N."/>
            <person name="Hattori A."/>
            <person name="Okumura K."/>
            <person name="Nagai K."/>
            <person name="Sugano S."/>
            <person name="Isogai T."/>
        </authorList>
    </citation>
    <scope>NUCLEOTIDE SEQUENCE [LARGE SCALE MRNA]</scope>
</reference>
<reference key="5">
    <citation type="submission" date="2005-07" db="EMBL/GenBank/DDBJ databases">
        <authorList>
            <person name="Mural R.J."/>
            <person name="Istrail S."/>
            <person name="Sutton G.G."/>
            <person name="Florea L."/>
            <person name="Halpern A.L."/>
            <person name="Mobarry C.M."/>
            <person name="Lippert R."/>
            <person name="Walenz B."/>
            <person name="Shatkay H."/>
            <person name="Dew I."/>
            <person name="Miller J.R."/>
            <person name="Flanigan M.J."/>
            <person name="Edwards N.J."/>
            <person name="Bolanos R."/>
            <person name="Fasulo D."/>
            <person name="Halldorsson B.V."/>
            <person name="Hannenhalli S."/>
            <person name="Turner R."/>
            <person name="Yooseph S."/>
            <person name="Lu F."/>
            <person name="Nusskern D.R."/>
            <person name="Shue B.C."/>
            <person name="Zheng X.H."/>
            <person name="Zhong F."/>
            <person name="Delcher A.L."/>
            <person name="Huson D.H."/>
            <person name="Kravitz S.A."/>
            <person name="Mouchard L."/>
            <person name="Reinert K."/>
            <person name="Remington K.A."/>
            <person name="Clark A.G."/>
            <person name="Waterman M.S."/>
            <person name="Eichler E.E."/>
            <person name="Adams M.D."/>
            <person name="Hunkapiller M.W."/>
            <person name="Myers E.W."/>
            <person name="Venter J.C."/>
        </authorList>
    </citation>
    <scope>NUCLEOTIDE SEQUENCE [LARGE SCALE GENOMIC DNA]</scope>
</reference>
<reference key="6">
    <citation type="journal article" date="2004" name="Genome Res.">
        <title>The status, quality, and expansion of the NIH full-length cDNA project: the Mammalian Gene Collection (MGC).</title>
        <authorList>
            <consortium name="The MGC Project Team"/>
        </authorList>
    </citation>
    <scope>NUCLEOTIDE SEQUENCE [LARGE SCALE MRNA]</scope>
    <scope>VARIANTS VAL-26 AND GLY-53</scope>
    <source>
        <tissue>Brain</tissue>
        <tissue>Placenta</tissue>
    </source>
</reference>
<reference key="7">
    <citation type="journal article" date="1985" name="FEBS Lett.">
        <title>Amino acid sequence of human liver cathepsin B.</title>
        <authorList>
            <person name="Ritonja A."/>
            <person name="Popovic T."/>
            <person name="Turk V."/>
            <person name="Wiedenmann K."/>
            <person name="Machleidt W."/>
        </authorList>
    </citation>
    <scope>PROTEIN SEQUENCE OF 80-126 AND 129-333</scope>
    <scope>FUNCTION</scope>
    <scope>CATALYTIC ACTIVITY</scope>
    <source>
        <tissue>Liver</tissue>
    </source>
</reference>
<reference key="8">
    <citation type="journal article" date="1992" name="Biochem. J.">
        <title>Human tumour cathepsin B. Comparison with normal liver cathepsin B.</title>
        <authorList>
            <person name="Moin K."/>
            <person name="Day N.A."/>
            <person name="Sameni M."/>
            <person name="Hasnain S."/>
            <person name="Hirama T."/>
            <person name="Sloane B.F."/>
        </authorList>
    </citation>
    <scope>PROTEIN SEQUENCE OF 80-91 AND 129-139</scope>
    <source>
        <tissue>Liver</tissue>
    </source>
</reference>
<reference key="9">
    <citation type="journal article" date="1986" name="Proc. Natl. Acad. Sci. U.S.A.">
        <title>Isolation of a cDNA clone for the human lysosomal proteinase cathepsin B.</title>
        <authorList>
            <person name="Fong D."/>
            <person name="Calhoun D.H."/>
            <person name="Hsieh W.-T."/>
            <person name="Lee B."/>
            <person name="Wells R.D."/>
        </authorList>
    </citation>
    <scope>NUCLEOTIDE SEQUENCE [MRNA] OF 131-339</scope>
</reference>
<reference key="10">
    <citation type="journal article" date="2002" name="Biochem. Biophys. Res. Commun.">
        <title>Inhibition of MEPE cleavage by Phex.</title>
        <authorList>
            <person name="Guo R."/>
            <person name="Rowe P.S."/>
            <person name="Liu S."/>
            <person name="Simpson L.G."/>
            <person name="Xiao Z.S."/>
            <person name="Quarles L.D."/>
        </authorList>
    </citation>
    <scope>FUNCTION</scope>
    <scope>CATALYTIC ACTIVITY</scope>
    <scope>ACTIVITY REGULATION</scope>
</reference>
<reference key="11">
    <citation type="journal article" date="2003" name="J. Proteome Res.">
        <title>Proteomic analysis of early melanosomes: identification of novel melanosomal proteins.</title>
        <authorList>
            <person name="Basrur V."/>
            <person name="Yang F."/>
            <person name="Kushimoto T."/>
            <person name="Higashimoto Y."/>
            <person name="Yasumoto K."/>
            <person name="Valencia J."/>
            <person name="Muller J."/>
            <person name="Vieira W.D."/>
            <person name="Watabe H."/>
            <person name="Shabanowitz J."/>
            <person name="Hearing V.J."/>
            <person name="Hunt D.F."/>
            <person name="Appella E."/>
        </authorList>
    </citation>
    <scope>SUBCELLULAR LOCATION [LARGE SCALE ANALYSIS]</scope>
    <source>
        <tissue>Melanoma</tissue>
    </source>
</reference>
<reference key="12">
    <citation type="journal article" date="2006" name="J. Proteome Res.">
        <title>Proteomic and bioinformatic characterization of the biogenesis and function of melanosomes.</title>
        <authorList>
            <person name="Chi A."/>
            <person name="Valencia J.C."/>
            <person name="Hu Z.-Z."/>
            <person name="Watabe H."/>
            <person name="Yamaguchi H."/>
            <person name="Mangini N.J."/>
            <person name="Huang H."/>
            <person name="Canfield V.A."/>
            <person name="Cheng K.C."/>
            <person name="Yang F."/>
            <person name="Abe R."/>
            <person name="Yamagishi S."/>
            <person name="Shabanowitz J."/>
            <person name="Hearing V.J."/>
            <person name="Wu C."/>
            <person name="Appella E."/>
            <person name="Hunt D.F."/>
        </authorList>
    </citation>
    <scope>SUBCELLULAR LOCATION [LARGE SCALE ANALYSIS]</scope>
    <source>
        <tissue>Melanoma</tissue>
    </source>
</reference>
<reference key="13">
    <citation type="journal article" date="2006" name="Mol. Cell. Biochem.">
        <title>Human homologue of SETA binding protein 1 interacts with cathepsin B and participates in TNF-Induced apoptosis in ovarian cancer cells.</title>
        <authorList>
            <person name="Liu J.P."/>
            <person name="Liu N.S."/>
            <person name="Yuan H.Y."/>
            <person name="Guo Q."/>
            <person name="Lu H."/>
            <person name="Li Y.Y."/>
        </authorList>
    </citation>
    <scope>INTERACTION WITH SHKBP1</scope>
    <scope>SUBCELLULAR LOCATION</scope>
</reference>
<reference key="14">
    <citation type="journal article" date="2008" name="Hum. Mol. Genet.">
        <title>Epileptic and developmental disorders of the speech cortex: ligand/receptor interaction of wild-type and mutant SRPX2 with the plasminogen activator receptor uPAR.</title>
        <authorList>
            <person name="Royer-Zemmour B."/>
            <person name="Ponsole-Lenfant M."/>
            <person name="Gara H."/>
            <person name="Roll P."/>
            <person name="Leveque C."/>
            <person name="Massacrier A."/>
            <person name="Ferracci G."/>
            <person name="Cillario J."/>
            <person name="Robaglia-Schlupp A."/>
            <person name="Vincentelli R."/>
            <person name="Cau P."/>
            <person name="Szepetowski P."/>
        </authorList>
    </citation>
    <scope>INTERACTION WITH SRPX2</scope>
</reference>
<reference key="15">
    <citation type="journal article" date="2017" name="Am. J. Hum. Genet.">
        <title>Duplicated enhancer region increases expression of CTSB and segregates with keratolytic winter erythema in South African and Norwegian families.</title>
        <authorList>
            <person name="Ngcungcu T."/>
            <person name="Oti M."/>
            <person name="Sitek J.C."/>
            <person name="Haukanes B.I."/>
            <person name="Linghu B."/>
            <person name="Bruccoleri R."/>
            <person name="Stokowy T."/>
            <person name="Oakeley E.J."/>
            <person name="Yang F."/>
            <person name="Zhu J."/>
            <person name="Sultan M."/>
            <person name="Schalkwijk J."/>
            <person name="van Vlijmen-Willems I.M.J.J."/>
            <person name="von der Lippe C."/>
            <person name="Brunner H.G."/>
            <person name="Ersland K.M."/>
            <person name="Grayson W."/>
            <person name="Buechmann-Moller S."/>
            <person name="Sundnes O."/>
            <person name="Nirmala N."/>
            <person name="Morgan T.M."/>
            <person name="van Bokhoven H."/>
            <person name="Steen V.M."/>
            <person name="Hull P.R."/>
            <person name="Szustakowski J."/>
            <person name="Staedtler F."/>
            <person name="Zhou H."/>
            <person name="Fiskerstrand T."/>
            <person name="Ramsay M."/>
        </authorList>
    </citation>
    <scope>INVOLVEMENT IN KWE</scope>
    <scope>TISSUE SPECIFICITY</scope>
</reference>
<reference key="16">
    <citation type="journal article" date="2011" name="BMC Syst. Biol.">
        <title>Initial characterization of the human central proteome.</title>
        <authorList>
            <person name="Burkard T.R."/>
            <person name="Planyavsky M."/>
            <person name="Kaupe I."/>
            <person name="Breitwieser F.P."/>
            <person name="Buerckstuemmer T."/>
            <person name="Bennett K.L."/>
            <person name="Superti-Furga G."/>
            <person name="Colinge J."/>
        </authorList>
    </citation>
    <scope>IDENTIFICATION BY MASS SPECTROMETRY [LARGE SCALE ANALYSIS]</scope>
</reference>
<reference key="17">
    <citation type="journal article" date="2014" name="J. Proteomics">
        <title>An enzyme assisted RP-RPLC approach for in-depth analysis of human liver phosphoproteome.</title>
        <authorList>
            <person name="Bian Y."/>
            <person name="Song C."/>
            <person name="Cheng K."/>
            <person name="Dong M."/>
            <person name="Wang F."/>
            <person name="Huang J."/>
            <person name="Sun D."/>
            <person name="Wang L."/>
            <person name="Ye M."/>
            <person name="Zou H."/>
        </authorList>
    </citation>
    <scope>IDENTIFICATION BY MASS SPECTROMETRY [LARGE SCALE ANALYSIS]</scope>
    <source>
        <tissue>Liver</tissue>
    </source>
</reference>
<reference key="18">
    <citation type="journal article" date="2015" name="Proteomics">
        <title>N-terminome analysis of the human mitochondrial proteome.</title>
        <authorList>
            <person name="Vaca Jacome A.S."/>
            <person name="Rabilloud T."/>
            <person name="Schaeffer-Reiss C."/>
            <person name="Rompais M."/>
            <person name="Ayoub D."/>
            <person name="Lane L."/>
            <person name="Bairoch A."/>
            <person name="Van Dorsselaer A."/>
            <person name="Carapito C."/>
        </authorList>
    </citation>
    <scope>IDENTIFICATION BY MASS SPECTROMETRY [LARGE SCALE ANALYSIS]</scope>
</reference>
<reference key="19">
    <citation type="journal article" date="1991" name="EMBO J.">
        <title>The refined 2.15 A X-ray crystal structure of human liver cathepsin B: the structural basis for its specificity.</title>
        <authorList>
            <person name="Musil D."/>
            <person name="Zucic D."/>
            <person name="Turk D."/>
            <person name="Engh R.A."/>
            <person name="Mayr I."/>
            <person name="Huber R."/>
            <person name="Popovic T."/>
            <person name="Turk V."/>
            <person name="Towatari T."/>
            <person name="Katunuma N."/>
            <person name="Bode W."/>
        </authorList>
    </citation>
    <scope>X-RAY CRYSTALLOGRAPHY (2.15 ANGSTROMS)</scope>
    <scope>DISULFIDE BONDS</scope>
</reference>
<reference key="20">
    <citation type="journal article" date="1996" name="FEBS Lett.">
        <title>Crystal structures of human procathepsin B at 3.2- and 3.3-A resolution reveal an interaction motif between a papain-like cysteine protease and its propeptide.</title>
        <authorList>
            <person name="Turk D."/>
            <person name="Podobnik M."/>
            <person name="Kuhelj R."/>
            <person name="Dolinar M."/>
            <person name="Turk V."/>
        </authorList>
    </citation>
    <scope>X-RAY CRYSTALLOGRAPHY (3.2 ANGSTROMS)</scope>
</reference>
<reference key="21">
    <citation type="journal article" date="1997" name="J. Mol. Biol.">
        <title>Crystal structure of the wild-type human procathepsin B at 2.5-A resolution reveals the native active site of a papain-like cysteine protease zymogen.</title>
        <authorList>
            <person name="Podobnik M."/>
            <person name="Kuhelj R."/>
            <person name="Turk V."/>
            <person name="Turk D."/>
        </authorList>
    </citation>
    <scope>X-RAY CRYSTALLOGRAPHY (2.5 ANGSTROMS)</scope>
    <scope>ACTIVE SITE</scope>
</reference>
<reference evidence="20 21 22" key="22">
    <citation type="journal article" date="2023" name="Nat. Commun.">
        <title>Structure-based discovery of dual pathway inhibitors for SARS-CoV-2 entry.</title>
        <authorList>
            <person name="Wang H."/>
            <person name="Yang Q."/>
            <person name="Liu X."/>
            <person name="Xu Z."/>
            <person name="Shao M."/>
            <person name="Li D."/>
            <person name="Duan Y."/>
            <person name="Tang J."/>
            <person name="Yu X."/>
            <person name="Zhang Y."/>
            <person name="Hao A."/>
            <person name="Wang Y."/>
            <person name="Chen J."/>
            <person name="Zhu C."/>
            <person name="Guddat L."/>
            <person name="Chen H."/>
            <person name="Zhang L."/>
            <person name="Chen X."/>
            <person name="Jiang B."/>
            <person name="Sun L."/>
            <person name="Rao Z."/>
            <person name="Yang H."/>
        </authorList>
    </citation>
    <scope>X-RAY CRYSTALLOGRAPHY (1.55 ANGSTROMS) OF 77-333 IN COMPLEX WITH INHIBITORS</scope>
</reference>
<dbReference type="EC" id="3.4.22.1" evidence="7 16"/>
<dbReference type="EMBL" id="M14221">
    <property type="protein sequence ID" value="AAA52129.1"/>
    <property type="molecule type" value="mRNA"/>
</dbReference>
<dbReference type="EMBL" id="L16510">
    <property type="protein sequence ID" value="AAC37547.1"/>
    <property type="molecule type" value="mRNA"/>
</dbReference>
<dbReference type="EMBL" id="AK092070">
    <property type="protein sequence ID" value="BAG52477.1"/>
    <property type="molecule type" value="mRNA"/>
</dbReference>
<dbReference type="EMBL" id="AK075393">
    <property type="protein sequence ID" value="BAG52127.1"/>
    <property type="molecule type" value="mRNA"/>
</dbReference>
<dbReference type="EMBL" id="CH471157">
    <property type="protein sequence ID" value="EAW65630.1"/>
    <property type="molecule type" value="Genomic_DNA"/>
</dbReference>
<dbReference type="EMBL" id="BC010240">
    <property type="protein sequence ID" value="AAH10240.1"/>
    <property type="molecule type" value="mRNA"/>
</dbReference>
<dbReference type="EMBL" id="BC095408">
    <property type="protein sequence ID" value="AAH95408.1"/>
    <property type="molecule type" value="mRNA"/>
</dbReference>
<dbReference type="EMBL" id="M13230">
    <property type="protein sequence ID" value="AAA52125.1"/>
    <property type="molecule type" value="mRNA"/>
</dbReference>
<dbReference type="CCDS" id="CCDS5986.1"/>
<dbReference type="PIR" id="A26498">
    <property type="entry name" value="KHHUB"/>
</dbReference>
<dbReference type="RefSeq" id="NP_001371643.1">
    <property type="nucleotide sequence ID" value="NM_001384714.1"/>
</dbReference>
<dbReference type="RefSeq" id="NP_001371652.1">
    <property type="nucleotide sequence ID" value="NM_001384723.1"/>
</dbReference>
<dbReference type="RefSeq" id="NP_001371653.1">
    <property type="nucleotide sequence ID" value="NM_001384724.1"/>
</dbReference>
<dbReference type="RefSeq" id="NP_001371654.1">
    <property type="nucleotide sequence ID" value="NM_001384725.1"/>
</dbReference>
<dbReference type="RefSeq" id="NP_001371655.1">
    <property type="nucleotide sequence ID" value="NM_001384726.1"/>
</dbReference>
<dbReference type="RefSeq" id="NP_001371656.1">
    <property type="nucleotide sequence ID" value="NM_001384727.1"/>
</dbReference>
<dbReference type="RefSeq" id="NP_001371657.1">
    <property type="nucleotide sequence ID" value="NM_001384728.1"/>
</dbReference>
<dbReference type="RefSeq" id="NP_001899.1">
    <property type="nucleotide sequence ID" value="NM_001908.5"/>
</dbReference>
<dbReference type="RefSeq" id="NP_680090.1">
    <property type="nucleotide sequence ID" value="NM_147780.4"/>
</dbReference>
<dbReference type="RefSeq" id="NP_680091.1">
    <property type="nucleotide sequence ID" value="NM_147781.4"/>
</dbReference>
<dbReference type="RefSeq" id="NP_680092.1">
    <property type="nucleotide sequence ID" value="NM_147782.4"/>
</dbReference>
<dbReference type="RefSeq" id="NP_680093.1">
    <property type="nucleotide sequence ID" value="NM_147783.4"/>
</dbReference>
<dbReference type="RefSeq" id="XP_006716307.1">
    <property type="nucleotide sequence ID" value="XM_006716244.2"/>
</dbReference>
<dbReference type="RefSeq" id="XP_006716308.1">
    <property type="nucleotide sequence ID" value="XM_006716245.2"/>
</dbReference>
<dbReference type="RefSeq" id="XP_011542114.1">
    <property type="nucleotide sequence ID" value="XM_011543812.2"/>
</dbReference>
<dbReference type="RefSeq" id="XP_016868586.1">
    <property type="nucleotide sequence ID" value="XM_017013097.1"/>
</dbReference>
<dbReference type="RefSeq" id="XP_016868587.1">
    <property type="nucleotide sequence ID" value="XM_017013098.1"/>
</dbReference>
<dbReference type="RefSeq" id="XP_016868588.1">
    <property type="nucleotide sequence ID" value="XM_017013099.1"/>
</dbReference>
<dbReference type="RefSeq" id="XP_016868589.1">
    <property type="nucleotide sequence ID" value="XM_017013100.1"/>
</dbReference>
<dbReference type="PDB" id="1CSB">
    <property type="method" value="X-ray"/>
    <property type="resolution" value="2.00 A"/>
    <property type="chains" value="A/D=80-126, B/E=129-333"/>
</dbReference>
<dbReference type="PDB" id="1GMY">
    <property type="method" value="X-ray"/>
    <property type="resolution" value="1.90 A"/>
    <property type="chains" value="A/B/C=79-339"/>
</dbReference>
<dbReference type="PDB" id="1HUC">
    <property type="method" value="X-ray"/>
    <property type="resolution" value="2.10 A"/>
    <property type="chains" value="A/C=80-126, B/D=129-333"/>
</dbReference>
<dbReference type="PDB" id="1PBH">
    <property type="method" value="X-ray"/>
    <property type="resolution" value="3.20 A"/>
    <property type="chains" value="A=18-333"/>
</dbReference>
<dbReference type="PDB" id="2IPP">
    <property type="method" value="X-ray"/>
    <property type="resolution" value="2.15 A"/>
    <property type="chains" value="A=80-126, B=129-333"/>
</dbReference>
<dbReference type="PDB" id="2PBH">
    <property type="method" value="X-ray"/>
    <property type="resolution" value="3.30 A"/>
    <property type="chains" value="A=18-333"/>
</dbReference>
<dbReference type="PDB" id="3AI8">
    <property type="method" value="X-ray"/>
    <property type="resolution" value="2.11 A"/>
    <property type="chains" value="A/B=78-333"/>
</dbReference>
<dbReference type="PDB" id="3CBJ">
    <property type="method" value="X-ray"/>
    <property type="resolution" value="1.80 A"/>
    <property type="chains" value="A=74-339"/>
</dbReference>
<dbReference type="PDB" id="3CBK">
    <property type="method" value="X-ray"/>
    <property type="resolution" value="2.67 A"/>
    <property type="chains" value="A=74-339"/>
</dbReference>
<dbReference type="PDB" id="3K9M">
    <property type="method" value="X-ray"/>
    <property type="resolution" value="2.61 A"/>
    <property type="chains" value="A/B=80-333"/>
</dbReference>
<dbReference type="PDB" id="3PBH">
    <property type="method" value="X-ray"/>
    <property type="resolution" value="2.50 A"/>
    <property type="chains" value="A=18-333"/>
</dbReference>
<dbReference type="PDB" id="5MBL">
    <property type="method" value="X-ray"/>
    <property type="resolution" value="1.81 A"/>
    <property type="chains" value="A=78-333"/>
</dbReference>
<dbReference type="PDB" id="5MBM">
    <property type="method" value="X-ray"/>
    <property type="resolution" value="2.76 A"/>
    <property type="chains" value="A/B=78-333"/>
</dbReference>
<dbReference type="PDB" id="6AY2">
    <property type="method" value="X-ray"/>
    <property type="resolution" value="1.60 A"/>
    <property type="chains" value="A/B=79-333"/>
</dbReference>
<dbReference type="PDB" id="8B4T">
    <property type="method" value="X-ray"/>
    <property type="resolution" value="1.45 A"/>
    <property type="chains" value="A=79-333"/>
</dbReference>
<dbReference type="PDB" id="8B5F">
    <property type="method" value="X-ray"/>
    <property type="resolution" value="1.70 A"/>
    <property type="chains" value="A=79-333"/>
</dbReference>
<dbReference type="PDB" id="8HE9">
    <property type="method" value="X-ray"/>
    <property type="resolution" value="1.55 A"/>
    <property type="chains" value="A=79-333"/>
</dbReference>
<dbReference type="PDB" id="8HEI">
    <property type="method" value="X-ray"/>
    <property type="resolution" value="1.55 A"/>
    <property type="chains" value="A=77-333"/>
</dbReference>
<dbReference type="PDB" id="8HEN">
    <property type="method" value="X-ray"/>
    <property type="resolution" value="1.95 A"/>
    <property type="chains" value="A=77-333"/>
</dbReference>
<dbReference type="PDBsum" id="1CSB"/>
<dbReference type="PDBsum" id="1GMY"/>
<dbReference type="PDBsum" id="1HUC"/>
<dbReference type="PDBsum" id="1PBH"/>
<dbReference type="PDBsum" id="2IPP"/>
<dbReference type="PDBsum" id="2PBH"/>
<dbReference type="PDBsum" id="3AI8"/>
<dbReference type="PDBsum" id="3CBJ"/>
<dbReference type="PDBsum" id="3CBK"/>
<dbReference type="PDBsum" id="3K9M"/>
<dbReference type="PDBsum" id="3PBH"/>
<dbReference type="PDBsum" id="5MBL"/>
<dbReference type="PDBsum" id="5MBM"/>
<dbReference type="PDBsum" id="6AY2"/>
<dbReference type="PDBsum" id="8B4T"/>
<dbReference type="PDBsum" id="8B5F"/>
<dbReference type="PDBsum" id="8HE9"/>
<dbReference type="PDBsum" id="8HEI"/>
<dbReference type="PDBsum" id="8HEN"/>
<dbReference type="SMR" id="P07858"/>
<dbReference type="BioGRID" id="107888">
    <property type="interactions" value="229"/>
</dbReference>
<dbReference type="ComplexPortal" id="CPX-98">
    <property type="entry name" value="Cathepsin-B - cystatin-A complex"/>
</dbReference>
<dbReference type="DIP" id="DIP-42785N"/>
<dbReference type="FunCoup" id="P07858">
    <property type="interactions" value="1247"/>
</dbReference>
<dbReference type="IntAct" id="P07858">
    <property type="interactions" value="69"/>
</dbReference>
<dbReference type="MINT" id="P07858"/>
<dbReference type="STRING" id="9606.ENSP00000345672"/>
<dbReference type="BindingDB" id="P07858"/>
<dbReference type="ChEMBL" id="CHEMBL4072"/>
<dbReference type="DrugBank" id="DB02108">
    <property type="generic name" value="2-Aminoethanimidic Acid"/>
</dbReference>
<dbReference type="DrugBank" id="DB03329">
    <property type="generic name" value="2-Pyridinethiol"/>
</dbReference>
<dbReference type="DrugBank" id="DB02148">
    <property type="generic name" value="3-Amino-4-Oxybenzyl-2-Butanone"/>
</dbReference>
<dbReference type="DrugBank" id="DB02685">
    <property type="generic name" value="3-Methylphenylalanine"/>
</dbReference>
<dbReference type="DrugBank" id="DB07219">
    <property type="generic name" value="BENZYL N-({(2S,3S)-3-[(PROPYLAMINO)CARBONYL]OXIRAN-2-YL}CARBONYL)-L-ISOLEUCYL-L-PROLINATE"/>
</dbReference>
<dbReference type="DrugBank" id="DB07223">
    <property type="generic name" value="CA-074 methyl ester"/>
</dbReference>
<dbReference type="DrugBank" id="DB03588">
    <property type="generic name" value="Diphenylacetic acid"/>
</dbReference>
<dbReference type="DrugBank" id="DB02855">
    <property type="generic name" value="N-(3-Propylcarbamoyloxirane-2-Carbonyl)-Isoleucyl-Proline"/>
</dbReference>
<dbReference type="DrugBank" id="DB07231">
    <property type="generic name" value="N-({(2S,3S)-3-[(BENZYLAMINO)CARBONYL]OXIRAN-2-YL}CARBONYL)-L-ISOLEUCYL-L-PROLINE"/>
</dbReference>
<dbReference type="DrugBank" id="DB04126">
    <property type="generic name" value="N-[1-Hydroxycarboxyethyl-Carbonyl]Leucylamino-2-Methyl-Butane"/>
</dbReference>
<dbReference type="DrugBank" id="DB04579">
    <property type="generic name" value="N-{[(2S,3S)-3-(Ethoxycarbonyl)-2-oxiranyl]carbonyl}-L-threonyl-L-isoleucine"/>
</dbReference>
<dbReference type="DrugBank" id="DB07160">
    <property type="generic name" value="N-{[(2S,3S)-3-(ETHOXYCARBONYL)OXIRAN-2-YL]CARBONYL}-L-ISOLEUCINE"/>
</dbReference>
<dbReference type="DrugBank" id="DB07224">
    <property type="generic name" value="N-{[(2S,3S)-3-(ETHOXYCARBONYL)OXIRAN-2-YL]CARBONYL}-L-ISOLEUCYL-L-ALANINE"/>
</dbReference>
<dbReference type="DrugBank" id="DB07225">
    <property type="generic name" value="N-{[(2S,3S)-3-(ETHOXYCARBONYL)OXIRAN-2-YL]CARBONYL}-L-ISOLEUCYL-L-ISOLEUCINE"/>
</dbReference>
<dbReference type="DrugBank" id="DB14962">
    <property type="generic name" value="Trastuzumab deruxtecan"/>
</dbReference>
<dbReference type="DrugCentral" id="P07858"/>
<dbReference type="GuidetoPHARMACOLOGY" id="2343"/>
<dbReference type="MEROPS" id="C01.060"/>
<dbReference type="GlyConnect" id="2934">
    <property type="glycosylation" value="1 N-Linked glycan (1 site)"/>
</dbReference>
<dbReference type="GlyCosmos" id="P07858">
    <property type="glycosylation" value="2 sites, 2 glycans"/>
</dbReference>
<dbReference type="GlyGen" id="P07858">
    <property type="glycosylation" value="4 sites, 10 N-linked glycans (1 site), 1 O-linked glycan (1 site)"/>
</dbReference>
<dbReference type="iPTMnet" id="P07858"/>
<dbReference type="MetOSite" id="P07858"/>
<dbReference type="PhosphoSitePlus" id="P07858"/>
<dbReference type="SwissPalm" id="P07858"/>
<dbReference type="BioMuta" id="CTSB"/>
<dbReference type="DMDM" id="68067549"/>
<dbReference type="CPTAC" id="CPTAC-186"/>
<dbReference type="CPTAC" id="CPTAC-187"/>
<dbReference type="jPOST" id="P07858"/>
<dbReference type="MassIVE" id="P07858"/>
<dbReference type="PaxDb" id="9606-ENSP00000345672"/>
<dbReference type="PeptideAtlas" id="P07858"/>
<dbReference type="PRIDE" id="P07858"/>
<dbReference type="ProteomicsDB" id="52029"/>
<dbReference type="Pumba" id="P07858"/>
<dbReference type="TopDownProteomics" id="P07858"/>
<dbReference type="ABCD" id="P07858">
    <property type="antibodies" value="3 sequenced antibodies"/>
</dbReference>
<dbReference type="Antibodypedia" id="4373">
    <property type="antibodies" value="698 antibodies from 45 providers"/>
</dbReference>
<dbReference type="DNASU" id="1508"/>
<dbReference type="Ensembl" id="ENST00000345125.8">
    <property type="protein sequence ID" value="ENSP00000342070.3"/>
    <property type="gene ID" value="ENSG00000164733.23"/>
</dbReference>
<dbReference type="Ensembl" id="ENST00000353047.11">
    <property type="protein sequence ID" value="ENSP00000345672.5"/>
    <property type="gene ID" value="ENSG00000164733.23"/>
</dbReference>
<dbReference type="Ensembl" id="ENST00000526645.6">
    <property type="protein sequence ID" value="ENSP00000431518.2"/>
    <property type="gene ID" value="ENSG00000164733.23"/>
</dbReference>
<dbReference type="Ensembl" id="ENST00000527215.7">
    <property type="protein sequence ID" value="ENSP00000433379.3"/>
    <property type="gene ID" value="ENSG00000164733.23"/>
</dbReference>
<dbReference type="Ensembl" id="ENST00000527243.6">
    <property type="protein sequence ID" value="ENSP00000434725.2"/>
    <property type="gene ID" value="ENSG00000164733.23"/>
</dbReference>
<dbReference type="Ensembl" id="ENST00000528965.3">
    <property type="protein sequence ID" value="ENSP00000433929.2"/>
    <property type="gene ID" value="ENSG00000164733.23"/>
</dbReference>
<dbReference type="Ensembl" id="ENST00000530296.6">
    <property type="protein sequence ID" value="ENSP00000435074.2"/>
    <property type="gene ID" value="ENSG00000164733.23"/>
</dbReference>
<dbReference type="Ensembl" id="ENST00000530640.7">
    <property type="protein sequence ID" value="ENSP00000435105.1"/>
    <property type="gene ID" value="ENSG00000164733.23"/>
</dbReference>
<dbReference type="Ensembl" id="ENST00000531089.6">
    <property type="protein sequence ID" value="ENSP00000433215.1"/>
    <property type="gene ID" value="ENSG00000164733.23"/>
</dbReference>
<dbReference type="Ensembl" id="ENST00000531502.6">
    <property type="protein sequence ID" value="ENSP00000435886.2"/>
    <property type="gene ID" value="ENSG00000164733.23"/>
</dbReference>
<dbReference type="Ensembl" id="ENST00000532392.3">
    <property type="protein sequence ID" value="ENSP00000432408.2"/>
    <property type="gene ID" value="ENSG00000164733.23"/>
</dbReference>
<dbReference type="Ensembl" id="ENST00000532656.7">
    <property type="protein sequence ID" value="ENSP00000431143.2"/>
    <property type="gene ID" value="ENSG00000164733.23"/>
</dbReference>
<dbReference type="Ensembl" id="ENST00000533455.6">
    <property type="protein sequence ID" value="ENSP00000432244.1"/>
    <property type="gene ID" value="ENSG00000164733.23"/>
</dbReference>
<dbReference type="Ensembl" id="ENST00000534382.6">
    <property type="protein sequence ID" value="ENSP00000435260.2"/>
    <property type="gene ID" value="ENSG00000164733.23"/>
</dbReference>
<dbReference type="Ensembl" id="ENST00000534510.6">
    <property type="protein sequence ID" value="ENSP00000434217.1"/>
    <property type="gene ID" value="ENSG00000164733.23"/>
</dbReference>
<dbReference type="Ensembl" id="ENST00000646105.3">
    <property type="protein sequence ID" value="ENSP00000493857.2"/>
    <property type="gene ID" value="ENSG00000285132.3"/>
</dbReference>
<dbReference type="Ensembl" id="ENST00000646239.2">
    <property type="protein sequence ID" value="ENSP00000494729.2"/>
    <property type="gene ID" value="ENSG00000285132.3"/>
</dbReference>
<dbReference type="Ensembl" id="ENST00000676691.1">
    <property type="protein sequence ID" value="ENSP00000503608.1"/>
    <property type="gene ID" value="ENSG00000164733.23"/>
</dbReference>
<dbReference type="Ensembl" id="ENST00000676755.1">
    <property type="protein sequence ID" value="ENSP00000504226.1"/>
    <property type="gene ID" value="ENSG00000164733.23"/>
</dbReference>
<dbReference type="Ensembl" id="ENST00000676825.1">
    <property type="protein sequence ID" value="ENSP00000503006.1"/>
    <property type="gene ID" value="ENSG00000164733.23"/>
</dbReference>
<dbReference type="Ensembl" id="ENST00000676843.1">
    <property type="protein sequence ID" value="ENSP00000504659.1"/>
    <property type="gene ID" value="ENSG00000164733.23"/>
</dbReference>
<dbReference type="Ensembl" id="ENST00000676952.1">
    <property type="protein sequence ID" value="ENSP00000503909.1"/>
    <property type="gene ID" value="ENSG00000164733.23"/>
</dbReference>
<dbReference type="Ensembl" id="ENST00000677082.1">
    <property type="protein sequence ID" value="ENSP00000503652.1"/>
    <property type="gene ID" value="ENSG00000164733.23"/>
</dbReference>
<dbReference type="Ensembl" id="ENST00000677366.1">
    <property type="protein sequence ID" value="ENSP00000504161.1"/>
    <property type="gene ID" value="ENSG00000164733.23"/>
</dbReference>
<dbReference type="Ensembl" id="ENST00000677415.1">
    <property type="protein sequence ID" value="ENSP00000502963.1"/>
    <property type="gene ID" value="ENSG00000164733.23"/>
</dbReference>
<dbReference type="Ensembl" id="ENST00000677418.1">
    <property type="protein sequence ID" value="ENSP00000503174.1"/>
    <property type="gene ID" value="ENSG00000164733.23"/>
</dbReference>
<dbReference type="Ensembl" id="ENST00000677544.1">
    <property type="protein sequence ID" value="ENSP00000503078.1"/>
    <property type="gene ID" value="ENSG00000164733.23"/>
</dbReference>
<dbReference type="Ensembl" id="ENST00000677650.1">
    <property type="protein sequence ID" value="ENSP00000504797.1"/>
    <property type="gene ID" value="ENSG00000164733.23"/>
</dbReference>
<dbReference type="Ensembl" id="ENST00000677671.1">
    <property type="protein sequence ID" value="ENSP00000503578.1"/>
    <property type="gene ID" value="ENSG00000164733.23"/>
</dbReference>
<dbReference type="Ensembl" id="ENST00000677819.1">
    <property type="protein sequence ID" value="ENSP00000503435.1"/>
    <property type="gene ID" value="ENSG00000164733.23"/>
</dbReference>
<dbReference type="Ensembl" id="ENST00000677873.1">
    <property type="protein sequence ID" value="ENSP00000503052.1"/>
    <property type="gene ID" value="ENSG00000164733.23"/>
</dbReference>
<dbReference type="Ensembl" id="ENST00000678092.1">
    <property type="protein sequence ID" value="ENSP00000504638.1"/>
    <property type="gene ID" value="ENSG00000164733.23"/>
</dbReference>
<dbReference type="Ensembl" id="ENST00000678145.1">
    <property type="protein sequence ID" value="ENSP00000503674.1"/>
    <property type="gene ID" value="ENSG00000164733.23"/>
</dbReference>
<dbReference type="Ensembl" id="ENST00000678242.1">
    <property type="protein sequence ID" value="ENSP00000503280.1"/>
    <property type="gene ID" value="ENSG00000164733.23"/>
</dbReference>
<dbReference type="Ensembl" id="ENST00000678357.1">
    <property type="protein sequence ID" value="ENSP00000503513.1"/>
    <property type="gene ID" value="ENSG00000164733.23"/>
</dbReference>
<dbReference type="Ensembl" id="ENST00000678615.1">
    <property type="protein sequence ID" value="ENSP00000504336.1"/>
    <property type="gene ID" value="ENSG00000164733.23"/>
</dbReference>
<dbReference type="Ensembl" id="ENST00000678929.1">
    <property type="protein sequence ID" value="ENSP00000503487.1"/>
    <property type="gene ID" value="ENSG00000164733.23"/>
</dbReference>
<dbReference type="Ensembl" id="ENST00000679051.1">
    <property type="protein sequence ID" value="ENSP00000503858.1"/>
    <property type="gene ID" value="ENSG00000164733.23"/>
</dbReference>
<dbReference type="Ensembl" id="ENST00000679128.1">
    <property type="protein sequence ID" value="ENSP00000504480.1"/>
    <property type="gene ID" value="ENSG00000164733.23"/>
</dbReference>
<dbReference type="Ensembl" id="ENST00000679140.1">
    <property type="protein sequence ID" value="ENSP00000503300.1"/>
    <property type="gene ID" value="ENSG00000164733.23"/>
</dbReference>
<dbReference type="Ensembl" id="ENST00000710700.1">
    <property type="protein sequence ID" value="ENSP00000518417.1"/>
    <property type="gene ID" value="ENSG00000285132.3"/>
</dbReference>
<dbReference type="Ensembl" id="ENST00000710702.1">
    <property type="protein sequence ID" value="ENSP00000518418.1"/>
    <property type="gene ID" value="ENSG00000285132.3"/>
</dbReference>
<dbReference type="Ensembl" id="ENST00000710703.1">
    <property type="protein sequence ID" value="ENSP00000518419.1"/>
    <property type="gene ID" value="ENSG00000285132.3"/>
</dbReference>
<dbReference type="Ensembl" id="ENST00000710704.1">
    <property type="protein sequence ID" value="ENSP00000518420.1"/>
    <property type="gene ID" value="ENSG00000285132.3"/>
</dbReference>
<dbReference type="Ensembl" id="ENST00000710705.1">
    <property type="protein sequence ID" value="ENSP00000518421.1"/>
    <property type="gene ID" value="ENSG00000285132.3"/>
</dbReference>
<dbReference type="Ensembl" id="ENST00000710713.1">
    <property type="protein sequence ID" value="ENSP00000518426.1"/>
    <property type="gene ID" value="ENSG00000285132.3"/>
</dbReference>
<dbReference type="Ensembl" id="ENST00000710714.1">
    <property type="protein sequence ID" value="ENSP00000518427.1"/>
    <property type="gene ID" value="ENSG00000285132.3"/>
</dbReference>
<dbReference type="Ensembl" id="ENST00000710715.1">
    <property type="protein sequence ID" value="ENSP00000518428.1"/>
    <property type="gene ID" value="ENSG00000285132.3"/>
</dbReference>
<dbReference type="Ensembl" id="ENST00000710716.1">
    <property type="protein sequence ID" value="ENSP00000518429.1"/>
    <property type="gene ID" value="ENSG00000285132.3"/>
</dbReference>
<dbReference type="Ensembl" id="ENST00000710717.1">
    <property type="protein sequence ID" value="ENSP00000518430.1"/>
    <property type="gene ID" value="ENSG00000285132.3"/>
</dbReference>
<dbReference type="Ensembl" id="ENST00000710718.1">
    <property type="protein sequence ID" value="ENSP00000518431.1"/>
    <property type="gene ID" value="ENSG00000285132.3"/>
</dbReference>
<dbReference type="Ensembl" id="ENST00000710719.1">
    <property type="protein sequence ID" value="ENSP00000518432.1"/>
    <property type="gene ID" value="ENSG00000285132.3"/>
</dbReference>
<dbReference type="Ensembl" id="ENST00000710720.1">
    <property type="protein sequence ID" value="ENSP00000518433.1"/>
    <property type="gene ID" value="ENSG00000285132.3"/>
</dbReference>
<dbReference type="Ensembl" id="ENST00000710721.1">
    <property type="protein sequence ID" value="ENSP00000518434.1"/>
    <property type="gene ID" value="ENSG00000285132.3"/>
</dbReference>
<dbReference type="Ensembl" id="ENST00000710722.1">
    <property type="protein sequence ID" value="ENSP00000518435.1"/>
    <property type="gene ID" value="ENSG00000285132.3"/>
</dbReference>
<dbReference type="Ensembl" id="ENST00000710723.1">
    <property type="protein sequence ID" value="ENSP00000518436.1"/>
    <property type="gene ID" value="ENSG00000285132.3"/>
</dbReference>
<dbReference type="Ensembl" id="ENST00000710724.1">
    <property type="protein sequence ID" value="ENSP00000518437.1"/>
    <property type="gene ID" value="ENSG00000285132.3"/>
</dbReference>
<dbReference type="Ensembl" id="ENST00000710725.1">
    <property type="protein sequence ID" value="ENSP00000518438.1"/>
    <property type="gene ID" value="ENSG00000285132.3"/>
</dbReference>
<dbReference type="Ensembl" id="ENST00000710727.1">
    <property type="protein sequence ID" value="ENSP00000518440.1"/>
    <property type="gene ID" value="ENSG00000285132.3"/>
</dbReference>
<dbReference type="Ensembl" id="ENST00000710728.1">
    <property type="protein sequence ID" value="ENSP00000518441.1"/>
    <property type="gene ID" value="ENSG00000285132.3"/>
</dbReference>
<dbReference type="Ensembl" id="ENST00000710729.1">
    <property type="protein sequence ID" value="ENSP00000518442.1"/>
    <property type="gene ID" value="ENSG00000285132.3"/>
</dbReference>
<dbReference type="Ensembl" id="ENST00000710730.1">
    <property type="protein sequence ID" value="ENSP00000518443.1"/>
    <property type="gene ID" value="ENSG00000285132.3"/>
</dbReference>
<dbReference type="Ensembl" id="ENST00000710731.1">
    <property type="protein sequence ID" value="ENSP00000518444.1"/>
    <property type="gene ID" value="ENSG00000285132.3"/>
</dbReference>
<dbReference type="Ensembl" id="ENST00000710732.1">
    <property type="protein sequence ID" value="ENSP00000518445.1"/>
    <property type="gene ID" value="ENSG00000285132.3"/>
</dbReference>
<dbReference type="Ensembl" id="ENST00000710743.1">
    <property type="protein sequence ID" value="ENSP00000518448.1"/>
    <property type="gene ID" value="ENSG00000285132.3"/>
</dbReference>
<dbReference type="Ensembl" id="ENST00000710744.1">
    <property type="protein sequence ID" value="ENSP00000518449.1"/>
    <property type="gene ID" value="ENSG00000285132.3"/>
</dbReference>
<dbReference type="Ensembl" id="ENST00000710745.1">
    <property type="protein sequence ID" value="ENSP00000518450.1"/>
    <property type="gene ID" value="ENSG00000285132.3"/>
</dbReference>
<dbReference type="Ensembl" id="ENST00000710747.1">
    <property type="protein sequence ID" value="ENSP00000518452.1"/>
    <property type="gene ID" value="ENSG00000285132.3"/>
</dbReference>
<dbReference type="Ensembl" id="ENST00000710750.1">
    <property type="protein sequence ID" value="ENSP00000518455.1"/>
    <property type="gene ID" value="ENSG00000285132.3"/>
</dbReference>
<dbReference type="Ensembl" id="ENST00000710751.1">
    <property type="protein sequence ID" value="ENSP00000518456.1"/>
    <property type="gene ID" value="ENSG00000285132.3"/>
</dbReference>
<dbReference type="Ensembl" id="ENST00000710752.1">
    <property type="protein sequence ID" value="ENSP00000518457.1"/>
    <property type="gene ID" value="ENSG00000285132.3"/>
</dbReference>
<dbReference type="Ensembl" id="ENST00000710755.1">
    <property type="protein sequence ID" value="ENSP00000518460.1"/>
    <property type="gene ID" value="ENSG00000285132.3"/>
</dbReference>
<dbReference type="Ensembl" id="ENST00000710759.1">
    <property type="protein sequence ID" value="ENSP00000518464.1"/>
    <property type="gene ID" value="ENSG00000285132.3"/>
</dbReference>
<dbReference type="Ensembl" id="ENST00000710761.1">
    <property type="protein sequence ID" value="ENSP00000518466.1"/>
    <property type="gene ID" value="ENSG00000285132.3"/>
</dbReference>
<dbReference type="Ensembl" id="ENST00000710763.1">
    <property type="protein sequence ID" value="ENSP00000518468.1"/>
    <property type="gene ID" value="ENSG00000285132.3"/>
</dbReference>
<dbReference type="Ensembl" id="ENST00000710764.1">
    <property type="protein sequence ID" value="ENSP00000518469.1"/>
    <property type="gene ID" value="ENSG00000285132.3"/>
</dbReference>
<dbReference type="GeneID" id="1508"/>
<dbReference type="KEGG" id="hsa:1508"/>
<dbReference type="MANE-Select" id="ENST00000353047.11">
    <property type="protein sequence ID" value="ENSP00000345672.5"/>
    <property type="RefSeq nucleotide sequence ID" value="NM_001908.5"/>
    <property type="RefSeq protein sequence ID" value="NP_001899.1"/>
</dbReference>
<dbReference type="UCSC" id="uc003wun.4">
    <property type="organism name" value="human"/>
</dbReference>
<dbReference type="AGR" id="HGNC:2527"/>
<dbReference type="CTD" id="1508"/>
<dbReference type="DisGeNET" id="1508"/>
<dbReference type="GeneCards" id="CTSB"/>
<dbReference type="HGNC" id="HGNC:2527">
    <property type="gene designation" value="CTSB"/>
</dbReference>
<dbReference type="HPA" id="ENSG00000164733">
    <property type="expression patterns" value="Low tissue specificity"/>
</dbReference>
<dbReference type="MalaCards" id="CTSB"/>
<dbReference type="MIM" id="116810">
    <property type="type" value="gene"/>
</dbReference>
<dbReference type="MIM" id="148370">
    <property type="type" value="phenotype"/>
</dbReference>
<dbReference type="neXtProt" id="NX_P07858"/>
<dbReference type="NIAGADS" id="ENSG00000164733"/>
<dbReference type="OpenTargets" id="ENSG00000164733"/>
<dbReference type="Orphanet" id="50943">
    <property type="disease" value="Keratolytic winter erythema"/>
</dbReference>
<dbReference type="PharmGKB" id="PA27027"/>
<dbReference type="VEuPathDB" id="HostDB:ENSG00000164733"/>
<dbReference type="eggNOG" id="KOG1543">
    <property type="taxonomic scope" value="Eukaryota"/>
</dbReference>
<dbReference type="GeneTree" id="ENSGT00940000158680"/>
<dbReference type="HOGENOM" id="CLU_012184_3_3_1"/>
<dbReference type="InParanoid" id="P07858"/>
<dbReference type="OMA" id="DEKIPYW"/>
<dbReference type="OrthoDB" id="640249at2759"/>
<dbReference type="PAN-GO" id="P07858">
    <property type="GO annotations" value="4 GO annotations based on evolutionary models"/>
</dbReference>
<dbReference type="PhylomeDB" id="P07858"/>
<dbReference type="TreeFam" id="TF314576"/>
<dbReference type="BRENDA" id="3.4.22.1">
    <property type="organism ID" value="2681"/>
</dbReference>
<dbReference type="PathwayCommons" id="P07858"/>
<dbReference type="Reactome" id="R-HSA-1442490">
    <property type="pathway name" value="Collagen degradation"/>
</dbReference>
<dbReference type="Reactome" id="R-HSA-1679131">
    <property type="pathway name" value="Trafficking and processing of endosomal TLR"/>
</dbReference>
<dbReference type="Reactome" id="R-HSA-2022090">
    <property type="pathway name" value="Assembly of collagen fibrils and other multimeric structures"/>
</dbReference>
<dbReference type="Reactome" id="R-HSA-2132295">
    <property type="pathway name" value="MHC class II antigen presentation"/>
</dbReference>
<dbReference type="Reactome" id="R-HSA-6798695">
    <property type="pathway name" value="Neutrophil degranulation"/>
</dbReference>
<dbReference type="SignaLink" id="P07858"/>
<dbReference type="SIGNOR" id="P07858"/>
<dbReference type="BioGRID-ORCS" id="1508">
    <property type="hits" value="13 hits in 1169 CRISPR screens"/>
</dbReference>
<dbReference type="ChiTaRS" id="CTSB">
    <property type="organism name" value="human"/>
</dbReference>
<dbReference type="EvolutionaryTrace" id="P07858"/>
<dbReference type="GeneWiki" id="Cathepsin_B"/>
<dbReference type="GenomeRNAi" id="1508"/>
<dbReference type="Pharos" id="P07858">
    <property type="development level" value="Tchem"/>
</dbReference>
<dbReference type="PRO" id="PR:P07858"/>
<dbReference type="Proteomes" id="UP000005640">
    <property type="component" value="Chromosome 8"/>
</dbReference>
<dbReference type="RNAct" id="P07858">
    <property type="molecule type" value="protein"/>
</dbReference>
<dbReference type="Bgee" id="ENSG00000164733">
    <property type="expression patterns" value="Expressed in stromal cell of endometrium and 97 other cell types or tissues"/>
</dbReference>
<dbReference type="ExpressionAtlas" id="P07858">
    <property type="expression patterns" value="baseline and differential"/>
</dbReference>
<dbReference type="GO" id="GO:0016324">
    <property type="term" value="C:apical plasma membrane"/>
    <property type="evidence" value="ECO:0007669"/>
    <property type="project" value="UniProtKB-SubCell"/>
</dbReference>
<dbReference type="GO" id="GO:0062023">
    <property type="term" value="C:collagen-containing extracellular matrix"/>
    <property type="evidence" value="ECO:0007005"/>
    <property type="project" value="BHF-UCL"/>
</dbReference>
<dbReference type="GO" id="GO:0036021">
    <property type="term" value="C:endolysosome lumen"/>
    <property type="evidence" value="ECO:0000304"/>
    <property type="project" value="Reactome"/>
</dbReference>
<dbReference type="GO" id="GO:0009897">
    <property type="term" value="C:external side of plasma membrane"/>
    <property type="evidence" value="ECO:0007669"/>
    <property type="project" value="Ensembl"/>
</dbReference>
<dbReference type="GO" id="GO:0070062">
    <property type="term" value="C:extracellular exosome"/>
    <property type="evidence" value="ECO:0007005"/>
    <property type="project" value="UniProtKB"/>
</dbReference>
<dbReference type="GO" id="GO:0005576">
    <property type="term" value="C:extracellular region"/>
    <property type="evidence" value="ECO:0000304"/>
    <property type="project" value="Reactome"/>
</dbReference>
<dbReference type="GO" id="GO:0005615">
    <property type="term" value="C:extracellular space"/>
    <property type="evidence" value="ECO:0000314"/>
    <property type="project" value="BHF-UCL"/>
</dbReference>
<dbReference type="GO" id="GO:1904813">
    <property type="term" value="C:ficolin-1-rich granule lumen"/>
    <property type="evidence" value="ECO:0000304"/>
    <property type="project" value="Reactome"/>
</dbReference>
<dbReference type="GO" id="GO:0005764">
    <property type="term" value="C:lysosome"/>
    <property type="evidence" value="ECO:0000314"/>
    <property type="project" value="UniProtKB"/>
</dbReference>
<dbReference type="GO" id="GO:0042470">
    <property type="term" value="C:melanosome"/>
    <property type="evidence" value="ECO:0007669"/>
    <property type="project" value="UniProtKB-SubCell"/>
</dbReference>
<dbReference type="GO" id="GO:1904090">
    <property type="term" value="C:peptidase inhibitor complex"/>
    <property type="evidence" value="ECO:0000353"/>
    <property type="project" value="ComplexPortal"/>
</dbReference>
<dbReference type="GO" id="GO:0048471">
    <property type="term" value="C:perinuclear region of cytoplasm"/>
    <property type="evidence" value="ECO:0000314"/>
    <property type="project" value="UniProtKB"/>
</dbReference>
<dbReference type="GO" id="GO:0005518">
    <property type="term" value="F:collagen binding"/>
    <property type="evidence" value="ECO:0000314"/>
    <property type="project" value="BHF-UCL"/>
</dbReference>
<dbReference type="GO" id="GO:0004197">
    <property type="term" value="F:cysteine-type endopeptidase activity"/>
    <property type="evidence" value="ECO:0000314"/>
    <property type="project" value="BHF-UCL"/>
</dbReference>
<dbReference type="GO" id="GO:0008234">
    <property type="term" value="F:cysteine-type peptidase activity"/>
    <property type="evidence" value="ECO:0000314"/>
    <property type="project" value="UniProtKB"/>
</dbReference>
<dbReference type="GO" id="GO:0008233">
    <property type="term" value="F:peptidase activity"/>
    <property type="evidence" value="ECO:0000314"/>
    <property type="project" value="BHF-UCL"/>
</dbReference>
<dbReference type="GO" id="GO:0043394">
    <property type="term" value="F:proteoglycan binding"/>
    <property type="evidence" value="ECO:0000353"/>
    <property type="project" value="BHF-UCL"/>
</dbReference>
<dbReference type="GO" id="GO:0097067">
    <property type="term" value="P:cellular response to thyroid hormone stimulus"/>
    <property type="evidence" value="ECO:0000270"/>
    <property type="project" value="UniProtKB"/>
</dbReference>
<dbReference type="GO" id="GO:0030574">
    <property type="term" value="P:collagen catabolic process"/>
    <property type="evidence" value="ECO:0000314"/>
    <property type="project" value="BHF-UCL"/>
</dbReference>
<dbReference type="GO" id="GO:0046697">
    <property type="term" value="P:decidualization"/>
    <property type="evidence" value="ECO:0007669"/>
    <property type="project" value="Ensembl"/>
</dbReference>
<dbReference type="GO" id="GO:0030855">
    <property type="term" value="P:epithelial cell differentiation"/>
    <property type="evidence" value="ECO:0000270"/>
    <property type="project" value="UniProtKB"/>
</dbReference>
<dbReference type="GO" id="GO:0006508">
    <property type="term" value="P:proteolysis"/>
    <property type="evidence" value="ECO:0000314"/>
    <property type="project" value="UniProtKB"/>
</dbReference>
<dbReference type="GO" id="GO:0051603">
    <property type="term" value="P:proteolysis involved in protein catabolic process"/>
    <property type="evidence" value="ECO:0000314"/>
    <property type="project" value="BHF-UCL"/>
</dbReference>
<dbReference type="GO" id="GO:0042981">
    <property type="term" value="P:regulation of apoptotic process"/>
    <property type="evidence" value="ECO:0000304"/>
    <property type="project" value="UniProtKB"/>
</dbReference>
<dbReference type="GO" id="GO:0046718">
    <property type="term" value="P:symbiont entry into host cell"/>
    <property type="evidence" value="ECO:0007669"/>
    <property type="project" value="Ensembl"/>
</dbReference>
<dbReference type="GO" id="GO:0006590">
    <property type="term" value="P:thyroid hormone generation"/>
    <property type="evidence" value="ECO:0007669"/>
    <property type="project" value="Ensembl"/>
</dbReference>
<dbReference type="CDD" id="cd02620">
    <property type="entry name" value="Peptidase_C1A_CathepsinB"/>
    <property type="match status" value="1"/>
</dbReference>
<dbReference type="FunFam" id="3.90.70.10:FF:000031">
    <property type="entry name" value="Cathepsin B"/>
    <property type="match status" value="1"/>
</dbReference>
<dbReference type="Gene3D" id="3.90.70.10">
    <property type="entry name" value="Cysteine proteinases"/>
    <property type="match status" value="1"/>
</dbReference>
<dbReference type="InterPro" id="IPR038765">
    <property type="entry name" value="Papain-like_cys_pep_sf"/>
</dbReference>
<dbReference type="InterPro" id="IPR025661">
    <property type="entry name" value="Pept_asp_AS"/>
</dbReference>
<dbReference type="InterPro" id="IPR000169">
    <property type="entry name" value="Pept_cys_AS"/>
</dbReference>
<dbReference type="InterPro" id="IPR025660">
    <property type="entry name" value="Pept_his_AS"/>
</dbReference>
<dbReference type="InterPro" id="IPR013128">
    <property type="entry name" value="Peptidase_C1A"/>
</dbReference>
<dbReference type="InterPro" id="IPR000668">
    <property type="entry name" value="Peptidase_C1A_C"/>
</dbReference>
<dbReference type="InterPro" id="IPR012599">
    <property type="entry name" value="Propeptide_C1A"/>
</dbReference>
<dbReference type="PANTHER" id="PTHR12411">
    <property type="entry name" value="CYSTEINE PROTEASE FAMILY C1-RELATED"/>
    <property type="match status" value="1"/>
</dbReference>
<dbReference type="Pfam" id="PF00112">
    <property type="entry name" value="Peptidase_C1"/>
    <property type="match status" value="1"/>
</dbReference>
<dbReference type="Pfam" id="PF08127">
    <property type="entry name" value="Propeptide_C1"/>
    <property type="match status" value="1"/>
</dbReference>
<dbReference type="PRINTS" id="PR00705">
    <property type="entry name" value="PAPAIN"/>
</dbReference>
<dbReference type="SMART" id="SM00645">
    <property type="entry name" value="Pept_C1"/>
    <property type="match status" value="1"/>
</dbReference>
<dbReference type="SUPFAM" id="SSF54001">
    <property type="entry name" value="Cysteine proteinases"/>
    <property type="match status" value="1"/>
</dbReference>
<dbReference type="PROSITE" id="PS00640">
    <property type="entry name" value="THIOL_PROTEASE_ASN"/>
    <property type="match status" value="1"/>
</dbReference>
<dbReference type="PROSITE" id="PS00139">
    <property type="entry name" value="THIOL_PROTEASE_CYS"/>
    <property type="match status" value="1"/>
</dbReference>
<dbReference type="PROSITE" id="PS00639">
    <property type="entry name" value="THIOL_PROTEASE_HIS"/>
    <property type="match status" value="1"/>
</dbReference>
<accession>P07858</accession>
<accession>B3KQR5</accession>
<accession>B3KRR5</accession>
<accession>Q503A6</accession>
<accession>Q96D87</accession>
<name>CATB_HUMAN</name>
<keyword id="KW-0002">3D-structure</keyword>
<keyword id="KW-0007">Acetylation</keyword>
<keyword id="KW-1003">Cell membrane</keyword>
<keyword id="KW-0903">Direct protein sequencing</keyword>
<keyword id="KW-1015">Disulfide bond</keyword>
<keyword id="KW-0325">Glycoprotein</keyword>
<keyword id="KW-0378">Hydrolase</keyword>
<keyword id="KW-0458">Lysosome</keyword>
<keyword id="KW-0472">Membrane</keyword>
<keyword id="KW-0645">Protease</keyword>
<keyword id="KW-1267">Proteomics identification</keyword>
<keyword id="KW-1185">Reference proteome</keyword>
<keyword id="KW-0964">Secreted</keyword>
<keyword id="KW-0732">Signal</keyword>
<keyword id="KW-0788">Thiol protease</keyword>
<keyword id="KW-0865">Zymogen</keyword>
<proteinExistence type="evidence at protein level"/>
<feature type="signal peptide" evidence="3">
    <location>
        <begin position="1"/>
        <end position="17"/>
    </location>
</feature>
<feature type="propeptide" id="PRO_0000026143" description="Activation peptide" evidence="16">
    <location>
        <begin position="18"/>
        <end position="79"/>
    </location>
</feature>
<feature type="chain" id="PRO_0000026144" description="Cathepsin B">
    <location>
        <begin position="80"/>
        <end position="333"/>
    </location>
</feature>
<feature type="chain" id="PRO_0000026145" description="Cathepsin B light chain" evidence="16">
    <location>
        <begin position="80"/>
        <end position="126"/>
    </location>
</feature>
<feature type="chain" id="PRO_0000026146" description="Cathepsin B heavy chain" evidence="16">
    <location>
        <begin position="129"/>
        <end position="333"/>
    </location>
</feature>
<feature type="propeptide" id="PRO_0000026147">
    <location>
        <begin position="334"/>
        <end position="339"/>
    </location>
</feature>
<feature type="active site" evidence="17">
    <location>
        <position position="108"/>
    </location>
</feature>
<feature type="active site" evidence="17">
    <location>
        <position position="278"/>
    </location>
</feature>
<feature type="active site" evidence="17">
    <location>
        <position position="298"/>
    </location>
</feature>
<feature type="modified residue" description="N6-acetyllysine" evidence="2">
    <location>
        <position position="220"/>
    </location>
</feature>
<feature type="glycosylation site" description="N-linked (GlcNAc...) asparagine" evidence="15">
    <location>
        <position position="192"/>
    </location>
</feature>
<feature type="disulfide bond" evidence="12">
    <location>
        <begin position="93"/>
        <end position="122"/>
    </location>
</feature>
<feature type="disulfide bond" evidence="12">
    <location>
        <begin position="105"/>
        <end position="150"/>
    </location>
</feature>
<feature type="disulfide bond" evidence="12">
    <location>
        <begin position="141"/>
        <end position="207"/>
    </location>
</feature>
<feature type="disulfide bond" evidence="12">
    <location>
        <begin position="142"/>
        <end position="146"/>
    </location>
</feature>
<feature type="disulfide bond" evidence="12">
    <location>
        <begin position="179"/>
        <end position="211"/>
    </location>
</feature>
<feature type="disulfide bond" evidence="12">
    <location>
        <begin position="187"/>
        <end position="198"/>
    </location>
</feature>
<feature type="sequence variant" id="VAR_006724" description="In dbSNP:rs12338." evidence="8 9 15">
    <original>L</original>
    <variation>V</variation>
    <location>
        <position position="26"/>
    </location>
</feature>
<feature type="sequence variant" id="VAR_051511" description="In dbSNP:rs1803250." evidence="9">
    <original>S</original>
    <variation>G</variation>
    <location>
        <position position="53"/>
    </location>
</feature>
<feature type="sequence variant" id="VAR_051512" description="In dbSNP:rs11548596.">
    <original>P</original>
    <variation>L</variation>
    <location>
        <position position="91"/>
    </location>
</feature>
<feature type="sequence variant" id="VAR_014696" description="In dbSNP:rs17573.">
    <original>S</original>
    <variation>N</variation>
    <location>
        <position position="235"/>
    </location>
</feature>
<feature type="sequence conflict" description="In Ref. 7; AA sequence." evidence="19" ref="7">
    <original>N</original>
    <variation>D</variation>
    <location>
        <position position="228"/>
    </location>
</feature>
<feature type="strand" evidence="27">
    <location>
        <begin position="20"/>
        <end position="22"/>
    </location>
</feature>
<feature type="helix" evidence="27">
    <location>
        <begin position="28"/>
        <end position="37"/>
    </location>
</feature>
<feature type="strand" evidence="27">
    <location>
        <begin position="40"/>
        <end position="43"/>
    </location>
</feature>
<feature type="helix" evidence="27">
    <location>
        <begin position="52"/>
        <end position="57"/>
    </location>
</feature>
<feature type="strand" evidence="27">
    <location>
        <begin position="69"/>
        <end position="72"/>
    </location>
</feature>
<feature type="strand" evidence="23">
    <location>
        <begin position="82"/>
        <end position="85"/>
    </location>
</feature>
<feature type="helix" evidence="31">
    <location>
        <begin position="86"/>
        <end position="89"/>
    </location>
</feature>
<feature type="helix" evidence="31">
    <location>
        <begin position="94"/>
        <end position="97"/>
    </location>
</feature>
<feature type="strand" evidence="30">
    <location>
        <begin position="104"/>
        <end position="106"/>
    </location>
</feature>
<feature type="helix" evidence="31">
    <location>
        <begin position="108"/>
        <end position="124"/>
    </location>
</feature>
<feature type="turn" evidence="31">
    <location>
        <begin position="125"/>
        <end position="127"/>
    </location>
</feature>
<feature type="strand" evidence="26">
    <location>
        <begin position="131"/>
        <end position="133"/>
    </location>
</feature>
<feature type="helix" evidence="31">
    <location>
        <begin position="135"/>
        <end position="141"/>
    </location>
</feature>
<feature type="helix" evidence="31">
    <location>
        <begin position="143"/>
        <end position="146"/>
    </location>
</feature>
<feature type="helix" evidence="31">
    <location>
        <begin position="149"/>
        <end position="151"/>
    </location>
</feature>
<feature type="helix" evidence="31">
    <location>
        <begin position="155"/>
        <end position="164"/>
    </location>
</feature>
<feature type="strand" evidence="27">
    <location>
        <begin position="167"/>
        <end position="170"/>
    </location>
</feature>
<feature type="turn" evidence="25">
    <location>
        <begin position="173"/>
        <end position="175"/>
    </location>
</feature>
<feature type="strand" evidence="31">
    <location>
        <begin position="178"/>
        <end position="180"/>
    </location>
</feature>
<feature type="strand" evidence="31">
    <location>
        <begin position="188"/>
        <end position="191"/>
    </location>
</feature>
<feature type="strand" evidence="31">
    <location>
        <begin position="193"/>
        <end position="195"/>
    </location>
</feature>
<feature type="helix" evidence="31">
    <location>
        <begin position="220"/>
        <end position="222"/>
    </location>
</feature>
<feature type="strand" evidence="28">
    <location>
        <begin position="226"/>
        <end position="231"/>
    </location>
</feature>
<feature type="helix" evidence="31">
    <location>
        <begin position="236"/>
        <end position="246"/>
    </location>
</feature>
<feature type="strand" evidence="31">
    <location>
        <begin position="249"/>
        <end position="256"/>
    </location>
</feature>
<feature type="helix" evidence="31">
    <location>
        <begin position="257"/>
        <end position="261"/>
    </location>
</feature>
<feature type="strand" evidence="31">
    <location>
        <begin position="264"/>
        <end position="267"/>
    </location>
</feature>
<feature type="strand" evidence="31">
    <location>
        <begin position="274"/>
        <end position="288"/>
    </location>
</feature>
<feature type="strand" evidence="31">
    <location>
        <begin position="291"/>
        <end position="297"/>
    </location>
</feature>
<feature type="strand" evidence="24">
    <location>
        <begin position="302"/>
        <end position="304"/>
    </location>
</feature>
<feature type="strand" evidence="31">
    <location>
        <begin position="309"/>
        <end position="313"/>
    </location>
</feature>
<feature type="turn" evidence="29">
    <location>
        <begin position="314"/>
        <end position="317"/>
    </location>
</feature>
<feature type="helix" evidence="31">
    <location>
        <begin position="318"/>
        <end position="320"/>
    </location>
</feature>
<feature type="turn" evidence="32">
    <location>
        <begin position="321"/>
        <end position="323"/>
    </location>
</feature>
<feature type="strand" evidence="28">
    <location>
        <begin position="326"/>
        <end position="330"/>
    </location>
</feature>
<organism>
    <name type="scientific">Homo sapiens</name>
    <name type="common">Human</name>
    <dbReference type="NCBI Taxonomy" id="9606"/>
    <lineage>
        <taxon>Eukaryota</taxon>
        <taxon>Metazoa</taxon>
        <taxon>Chordata</taxon>
        <taxon>Craniata</taxon>
        <taxon>Vertebrata</taxon>
        <taxon>Euteleostomi</taxon>
        <taxon>Mammalia</taxon>
        <taxon>Eutheria</taxon>
        <taxon>Euarchontoglires</taxon>
        <taxon>Primates</taxon>
        <taxon>Haplorrhini</taxon>
        <taxon>Catarrhini</taxon>
        <taxon>Hominidae</taxon>
        <taxon>Homo</taxon>
    </lineage>
</organism>
<gene>
    <name type="primary">CTSB</name>
    <name type="synonym">CPSB</name>
</gene>
<protein>
    <recommendedName>
        <fullName>Cathepsin B</fullName>
        <ecNumber evidence="7 16">3.4.22.1</ecNumber>
    </recommendedName>
    <alternativeName>
        <fullName>APP secretase</fullName>
        <shortName>APPS</shortName>
    </alternativeName>
    <alternativeName>
        <fullName>Cathepsin B1</fullName>
    </alternativeName>
    <component>
        <recommendedName>
            <fullName evidence="18">Cathepsin B light chain</fullName>
        </recommendedName>
    </component>
    <component>
        <recommendedName>
            <fullName evidence="18">Cathepsin B heavy chain</fullName>
        </recommendedName>
    </component>
</protein>